<name>RR19_VITVI</name>
<gene>
    <name evidence="1" type="primary">rps19</name>
</gene>
<dbReference type="EMBL" id="DQ424856">
    <property type="protein sequence ID" value="ABE47574.1"/>
    <property type="molecule type" value="Genomic_DNA"/>
</dbReference>
<dbReference type="RefSeq" id="YP_002608400.1">
    <property type="nucleotide sequence ID" value="NC_012119.1"/>
</dbReference>
<dbReference type="RefSeq" id="YP_567118.1">
    <property type="nucleotide sequence ID" value="NC_007957.1"/>
</dbReference>
<dbReference type="SMR" id="Q0ZIX8"/>
<dbReference type="FunCoup" id="Q0ZIX8">
    <property type="interactions" value="72"/>
</dbReference>
<dbReference type="STRING" id="29760.Q0ZIX8"/>
<dbReference type="GeneID" id="4025023"/>
<dbReference type="GeneID" id="7498602"/>
<dbReference type="KEGG" id="vvi:4025023"/>
<dbReference type="KEGG" id="vvi:7498602"/>
<dbReference type="InParanoid" id="Q0ZIX8"/>
<dbReference type="OrthoDB" id="841575at71240"/>
<dbReference type="Proteomes" id="UP000009183">
    <property type="component" value="Chloroplast"/>
</dbReference>
<dbReference type="GO" id="GO:0009507">
    <property type="term" value="C:chloroplast"/>
    <property type="evidence" value="ECO:0007669"/>
    <property type="project" value="UniProtKB-SubCell"/>
</dbReference>
<dbReference type="GO" id="GO:0005763">
    <property type="term" value="C:mitochondrial small ribosomal subunit"/>
    <property type="evidence" value="ECO:0000318"/>
    <property type="project" value="GO_Central"/>
</dbReference>
<dbReference type="GO" id="GO:0019843">
    <property type="term" value="F:rRNA binding"/>
    <property type="evidence" value="ECO:0007669"/>
    <property type="project" value="UniProtKB-UniRule"/>
</dbReference>
<dbReference type="GO" id="GO:0003735">
    <property type="term" value="F:structural constituent of ribosome"/>
    <property type="evidence" value="ECO:0000318"/>
    <property type="project" value="GO_Central"/>
</dbReference>
<dbReference type="GO" id="GO:0000028">
    <property type="term" value="P:ribosomal small subunit assembly"/>
    <property type="evidence" value="ECO:0000318"/>
    <property type="project" value="GO_Central"/>
</dbReference>
<dbReference type="GO" id="GO:0006412">
    <property type="term" value="P:translation"/>
    <property type="evidence" value="ECO:0007669"/>
    <property type="project" value="UniProtKB-UniRule"/>
</dbReference>
<dbReference type="FunFam" id="3.30.860.10:FF:000001">
    <property type="entry name" value="30S ribosomal protein S19"/>
    <property type="match status" value="1"/>
</dbReference>
<dbReference type="Gene3D" id="3.30.860.10">
    <property type="entry name" value="30s Ribosomal Protein S19, Chain A"/>
    <property type="match status" value="1"/>
</dbReference>
<dbReference type="HAMAP" id="MF_00531">
    <property type="entry name" value="Ribosomal_uS19"/>
    <property type="match status" value="1"/>
</dbReference>
<dbReference type="InterPro" id="IPR002222">
    <property type="entry name" value="Ribosomal_uS19"/>
</dbReference>
<dbReference type="InterPro" id="IPR005732">
    <property type="entry name" value="Ribosomal_uS19_bac-type"/>
</dbReference>
<dbReference type="InterPro" id="IPR020934">
    <property type="entry name" value="Ribosomal_uS19_CS"/>
</dbReference>
<dbReference type="InterPro" id="IPR023575">
    <property type="entry name" value="Ribosomal_uS19_SF"/>
</dbReference>
<dbReference type="NCBIfam" id="TIGR01050">
    <property type="entry name" value="rpsS_bact"/>
    <property type="match status" value="1"/>
</dbReference>
<dbReference type="PANTHER" id="PTHR11880">
    <property type="entry name" value="RIBOSOMAL PROTEIN S19P FAMILY MEMBER"/>
    <property type="match status" value="1"/>
</dbReference>
<dbReference type="PANTHER" id="PTHR11880:SF8">
    <property type="entry name" value="SMALL RIBOSOMAL SUBUNIT PROTEIN US19M"/>
    <property type="match status" value="1"/>
</dbReference>
<dbReference type="Pfam" id="PF00203">
    <property type="entry name" value="Ribosomal_S19"/>
    <property type="match status" value="1"/>
</dbReference>
<dbReference type="PIRSF" id="PIRSF002144">
    <property type="entry name" value="Ribosomal_S19"/>
    <property type="match status" value="1"/>
</dbReference>
<dbReference type="PRINTS" id="PR00975">
    <property type="entry name" value="RIBOSOMALS19"/>
</dbReference>
<dbReference type="SUPFAM" id="SSF54570">
    <property type="entry name" value="Ribosomal protein S19"/>
    <property type="match status" value="1"/>
</dbReference>
<dbReference type="PROSITE" id="PS00323">
    <property type="entry name" value="RIBOSOMAL_S19"/>
    <property type="match status" value="1"/>
</dbReference>
<sequence length="92" mass="10698">MTRSLKKNPFIAKHLLRKIAMLNTTWEKEIIVTWSRTSTIIPTMIGHTIAVHNGKEHFPIYITDRMVGHKLGEFSSTLNFRGHAKNDNRSRR</sequence>
<geneLocation type="chloroplast"/>
<organism>
    <name type="scientific">Vitis vinifera</name>
    <name type="common">Grape</name>
    <dbReference type="NCBI Taxonomy" id="29760"/>
    <lineage>
        <taxon>Eukaryota</taxon>
        <taxon>Viridiplantae</taxon>
        <taxon>Streptophyta</taxon>
        <taxon>Embryophyta</taxon>
        <taxon>Tracheophyta</taxon>
        <taxon>Spermatophyta</taxon>
        <taxon>Magnoliopsida</taxon>
        <taxon>eudicotyledons</taxon>
        <taxon>Gunneridae</taxon>
        <taxon>Pentapetalae</taxon>
        <taxon>rosids</taxon>
        <taxon>Vitales</taxon>
        <taxon>Vitaceae</taxon>
        <taxon>Viteae</taxon>
        <taxon>Vitis</taxon>
    </lineage>
</organism>
<feature type="chain" id="PRO_0000276929" description="Small ribosomal subunit protein uS19c">
    <location>
        <begin position="1"/>
        <end position="92"/>
    </location>
</feature>
<evidence type="ECO:0000255" key="1">
    <source>
        <dbReference type="HAMAP-Rule" id="MF_00531"/>
    </source>
</evidence>
<evidence type="ECO:0000305" key="2"/>
<keyword id="KW-0150">Chloroplast</keyword>
<keyword id="KW-0934">Plastid</keyword>
<keyword id="KW-1185">Reference proteome</keyword>
<keyword id="KW-0687">Ribonucleoprotein</keyword>
<keyword id="KW-0689">Ribosomal protein</keyword>
<keyword id="KW-0694">RNA-binding</keyword>
<keyword id="KW-0699">rRNA-binding</keyword>
<reference key="1">
    <citation type="journal article" date="2006" name="BMC Evol. Biol.">
        <title>Phylogenetic analyses of Vitis (Vitaceae) based on complete chloroplast genome sequences: effects of taxon sampling and phylogenetic methods on resolving relationships among rosids.</title>
        <authorList>
            <person name="Jansen R.K."/>
            <person name="Kaittanis C."/>
            <person name="Lee S.-B."/>
            <person name="Saski C."/>
            <person name="Tomkins J."/>
            <person name="Alverson A.J."/>
            <person name="Daniell H."/>
        </authorList>
    </citation>
    <scope>NUCLEOTIDE SEQUENCE [LARGE SCALE GENOMIC DNA]</scope>
    <source>
        <strain>cv. Maxxa</strain>
    </source>
</reference>
<comment type="function">
    <text evidence="1">Protein S19 forms a complex with S13 that binds strongly to the 16S ribosomal RNA.</text>
</comment>
<comment type="subcellular location">
    <subcellularLocation>
        <location>Plastid</location>
        <location>Chloroplast</location>
    </subcellularLocation>
</comment>
<comment type="similarity">
    <text evidence="1">Belongs to the universal ribosomal protein uS19 family.</text>
</comment>
<accession>Q0ZIX8</accession>
<proteinExistence type="inferred from homology"/>
<protein>
    <recommendedName>
        <fullName evidence="1">Small ribosomal subunit protein uS19c</fullName>
    </recommendedName>
    <alternativeName>
        <fullName evidence="2">30S ribosomal protein S19, chloroplastic</fullName>
    </alternativeName>
</protein>